<reference key="1">
    <citation type="journal article" date="1997" name="Nat. Genet.">
        <title>The early-onset torsion dystonia gene (DYT1) encodes an ATP-binding protein.</title>
        <authorList>
            <person name="Ozelius L.J."/>
            <person name="Hewett J.W."/>
            <person name="Page C.E."/>
            <person name="Bressman S.B."/>
            <person name="Kramer P.L."/>
            <person name="Shalish C."/>
            <person name="de Leon D."/>
            <person name="Brin M.F."/>
            <person name="Raymond D."/>
            <person name="Corey D.P."/>
            <person name="Fahn S."/>
            <person name="Risch N.J."/>
            <person name="Buckler A.J."/>
            <person name="Gusella J.F."/>
            <person name="Breakefield X.O."/>
        </authorList>
    </citation>
    <scope>NUCLEOTIDE SEQUENCE [MRNA] (ISOFORM 1)</scope>
    <scope>VARIANT DYT1 GLU-303 DEL</scope>
    <scope>VARIANT HIS-264</scope>
    <source>
        <tissue>Brain cortex</tissue>
        <tissue>Hippocampus</tissue>
        <tissue>Substantia nigra</tissue>
    </source>
</reference>
<reference key="2">
    <citation type="journal article" date="2004" name="Nat. Genet.">
        <title>Complete sequencing and characterization of 21,243 full-length human cDNAs.</title>
        <authorList>
            <person name="Ota T."/>
            <person name="Suzuki Y."/>
            <person name="Nishikawa T."/>
            <person name="Otsuki T."/>
            <person name="Sugiyama T."/>
            <person name="Irie R."/>
            <person name="Wakamatsu A."/>
            <person name="Hayashi K."/>
            <person name="Sato H."/>
            <person name="Nagai K."/>
            <person name="Kimura K."/>
            <person name="Makita H."/>
            <person name="Sekine M."/>
            <person name="Obayashi M."/>
            <person name="Nishi T."/>
            <person name="Shibahara T."/>
            <person name="Tanaka T."/>
            <person name="Ishii S."/>
            <person name="Yamamoto J."/>
            <person name="Saito K."/>
            <person name="Kawai Y."/>
            <person name="Isono Y."/>
            <person name="Nakamura Y."/>
            <person name="Nagahari K."/>
            <person name="Murakami K."/>
            <person name="Yasuda T."/>
            <person name="Iwayanagi T."/>
            <person name="Wagatsuma M."/>
            <person name="Shiratori A."/>
            <person name="Sudo H."/>
            <person name="Hosoiri T."/>
            <person name="Kaku Y."/>
            <person name="Kodaira H."/>
            <person name="Kondo H."/>
            <person name="Sugawara M."/>
            <person name="Takahashi M."/>
            <person name="Kanda K."/>
            <person name="Yokoi T."/>
            <person name="Furuya T."/>
            <person name="Kikkawa E."/>
            <person name="Omura Y."/>
            <person name="Abe K."/>
            <person name="Kamihara K."/>
            <person name="Katsuta N."/>
            <person name="Sato K."/>
            <person name="Tanikawa M."/>
            <person name="Yamazaki M."/>
            <person name="Ninomiya K."/>
            <person name="Ishibashi T."/>
            <person name="Yamashita H."/>
            <person name="Murakawa K."/>
            <person name="Fujimori K."/>
            <person name="Tanai H."/>
            <person name="Kimata M."/>
            <person name="Watanabe M."/>
            <person name="Hiraoka S."/>
            <person name="Chiba Y."/>
            <person name="Ishida S."/>
            <person name="Ono Y."/>
            <person name="Takiguchi S."/>
            <person name="Watanabe S."/>
            <person name="Yosida M."/>
            <person name="Hotuta T."/>
            <person name="Kusano J."/>
            <person name="Kanehori K."/>
            <person name="Takahashi-Fujii A."/>
            <person name="Hara H."/>
            <person name="Tanase T.-O."/>
            <person name="Nomura Y."/>
            <person name="Togiya S."/>
            <person name="Komai F."/>
            <person name="Hara R."/>
            <person name="Takeuchi K."/>
            <person name="Arita M."/>
            <person name="Imose N."/>
            <person name="Musashino K."/>
            <person name="Yuuki H."/>
            <person name="Oshima A."/>
            <person name="Sasaki N."/>
            <person name="Aotsuka S."/>
            <person name="Yoshikawa Y."/>
            <person name="Matsunawa H."/>
            <person name="Ichihara T."/>
            <person name="Shiohata N."/>
            <person name="Sano S."/>
            <person name="Moriya S."/>
            <person name="Momiyama H."/>
            <person name="Satoh N."/>
            <person name="Takami S."/>
            <person name="Terashima Y."/>
            <person name="Suzuki O."/>
            <person name="Nakagawa S."/>
            <person name="Senoh A."/>
            <person name="Mizoguchi H."/>
            <person name="Goto Y."/>
            <person name="Shimizu F."/>
            <person name="Wakebe H."/>
            <person name="Hishigaki H."/>
            <person name="Watanabe T."/>
            <person name="Sugiyama A."/>
            <person name="Takemoto M."/>
            <person name="Kawakami B."/>
            <person name="Yamazaki M."/>
            <person name="Watanabe K."/>
            <person name="Kumagai A."/>
            <person name="Itakura S."/>
            <person name="Fukuzumi Y."/>
            <person name="Fujimori Y."/>
            <person name="Komiyama M."/>
            <person name="Tashiro H."/>
            <person name="Tanigami A."/>
            <person name="Fujiwara T."/>
            <person name="Ono T."/>
            <person name="Yamada K."/>
            <person name="Fujii Y."/>
            <person name="Ozaki K."/>
            <person name="Hirao M."/>
            <person name="Ohmori Y."/>
            <person name="Kawabata A."/>
            <person name="Hikiji T."/>
            <person name="Kobatake N."/>
            <person name="Inagaki H."/>
            <person name="Ikema Y."/>
            <person name="Okamoto S."/>
            <person name="Okitani R."/>
            <person name="Kawakami T."/>
            <person name="Noguchi S."/>
            <person name="Itoh T."/>
            <person name="Shigeta K."/>
            <person name="Senba T."/>
            <person name="Matsumura K."/>
            <person name="Nakajima Y."/>
            <person name="Mizuno T."/>
            <person name="Morinaga M."/>
            <person name="Sasaki M."/>
            <person name="Togashi T."/>
            <person name="Oyama M."/>
            <person name="Hata H."/>
            <person name="Watanabe M."/>
            <person name="Komatsu T."/>
            <person name="Mizushima-Sugano J."/>
            <person name="Satoh T."/>
            <person name="Shirai Y."/>
            <person name="Takahashi Y."/>
            <person name="Nakagawa K."/>
            <person name="Okumura K."/>
            <person name="Nagase T."/>
            <person name="Nomura N."/>
            <person name="Kikuchi H."/>
            <person name="Masuho Y."/>
            <person name="Yamashita R."/>
            <person name="Nakai K."/>
            <person name="Yada T."/>
            <person name="Nakamura Y."/>
            <person name="Ohara O."/>
            <person name="Isogai T."/>
            <person name="Sugano S."/>
        </authorList>
    </citation>
    <scope>NUCLEOTIDE SEQUENCE [LARGE SCALE MRNA] (ISOFORM 1)</scope>
</reference>
<reference key="3">
    <citation type="submission" date="2003-05" db="EMBL/GenBank/DDBJ databases">
        <title>Cloning of human full-length CDSs in BD Creator(TM) system donor vector.</title>
        <authorList>
            <person name="Kalnine N."/>
            <person name="Chen X."/>
            <person name="Rolfs A."/>
            <person name="Halleck A."/>
            <person name="Hines L."/>
            <person name="Eisenstein S."/>
            <person name="Koundinya M."/>
            <person name="Raphael J."/>
            <person name="Moreira D."/>
            <person name="Kelley T."/>
            <person name="LaBaer J."/>
            <person name="Lin Y."/>
            <person name="Phelan M."/>
            <person name="Farmer A."/>
        </authorList>
    </citation>
    <scope>NUCLEOTIDE SEQUENCE [LARGE SCALE MRNA] (ISOFORM 1)</scope>
</reference>
<reference key="4">
    <citation type="journal article" date="2004" name="Nature">
        <title>DNA sequence and analysis of human chromosome 9.</title>
        <authorList>
            <person name="Humphray S.J."/>
            <person name="Oliver K."/>
            <person name="Hunt A.R."/>
            <person name="Plumb R.W."/>
            <person name="Loveland J.E."/>
            <person name="Howe K.L."/>
            <person name="Andrews T.D."/>
            <person name="Searle S."/>
            <person name="Hunt S.E."/>
            <person name="Scott C.E."/>
            <person name="Jones M.C."/>
            <person name="Ainscough R."/>
            <person name="Almeida J.P."/>
            <person name="Ambrose K.D."/>
            <person name="Ashwell R.I.S."/>
            <person name="Babbage A.K."/>
            <person name="Babbage S."/>
            <person name="Bagguley C.L."/>
            <person name="Bailey J."/>
            <person name="Banerjee R."/>
            <person name="Barker D.J."/>
            <person name="Barlow K.F."/>
            <person name="Bates K."/>
            <person name="Beasley H."/>
            <person name="Beasley O."/>
            <person name="Bird C.P."/>
            <person name="Bray-Allen S."/>
            <person name="Brown A.J."/>
            <person name="Brown J.Y."/>
            <person name="Burford D."/>
            <person name="Burrill W."/>
            <person name="Burton J."/>
            <person name="Carder C."/>
            <person name="Carter N.P."/>
            <person name="Chapman J.C."/>
            <person name="Chen Y."/>
            <person name="Clarke G."/>
            <person name="Clark S.Y."/>
            <person name="Clee C.M."/>
            <person name="Clegg S."/>
            <person name="Collier R.E."/>
            <person name="Corby N."/>
            <person name="Crosier M."/>
            <person name="Cummings A.T."/>
            <person name="Davies J."/>
            <person name="Dhami P."/>
            <person name="Dunn M."/>
            <person name="Dutta I."/>
            <person name="Dyer L.W."/>
            <person name="Earthrowl M.E."/>
            <person name="Faulkner L."/>
            <person name="Fleming C.J."/>
            <person name="Frankish A."/>
            <person name="Frankland J.A."/>
            <person name="French L."/>
            <person name="Fricker D.G."/>
            <person name="Garner P."/>
            <person name="Garnett J."/>
            <person name="Ghori J."/>
            <person name="Gilbert J.G.R."/>
            <person name="Glison C."/>
            <person name="Grafham D.V."/>
            <person name="Gribble S."/>
            <person name="Griffiths C."/>
            <person name="Griffiths-Jones S."/>
            <person name="Grocock R."/>
            <person name="Guy J."/>
            <person name="Hall R.E."/>
            <person name="Hammond S."/>
            <person name="Harley J.L."/>
            <person name="Harrison E.S.I."/>
            <person name="Hart E.A."/>
            <person name="Heath P.D."/>
            <person name="Henderson C.D."/>
            <person name="Hopkins B.L."/>
            <person name="Howard P.J."/>
            <person name="Howden P.J."/>
            <person name="Huckle E."/>
            <person name="Johnson C."/>
            <person name="Johnson D."/>
            <person name="Joy A.A."/>
            <person name="Kay M."/>
            <person name="Keenan S."/>
            <person name="Kershaw J.K."/>
            <person name="Kimberley A.M."/>
            <person name="King A."/>
            <person name="Knights A."/>
            <person name="Laird G.K."/>
            <person name="Langford C."/>
            <person name="Lawlor S."/>
            <person name="Leongamornlert D.A."/>
            <person name="Leversha M."/>
            <person name="Lloyd C."/>
            <person name="Lloyd D.M."/>
            <person name="Lovell J."/>
            <person name="Martin S."/>
            <person name="Mashreghi-Mohammadi M."/>
            <person name="Matthews L."/>
            <person name="McLaren S."/>
            <person name="McLay K.E."/>
            <person name="McMurray A."/>
            <person name="Milne S."/>
            <person name="Nickerson T."/>
            <person name="Nisbett J."/>
            <person name="Nordsiek G."/>
            <person name="Pearce A.V."/>
            <person name="Peck A.I."/>
            <person name="Porter K.M."/>
            <person name="Pandian R."/>
            <person name="Pelan S."/>
            <person name="Phillimore B."/>
            <person name="Povey S."/>
            <person name="Ramsey Y."/>
            <person name="Rand V."/>
            <person name="Scharfe M."/>
            <person name="Sehra H.K."/>
            <person name="Shownkeen R."/>
            <person name="Sims S.K."/>
            <person name="Skuce C.D."/>
            <person name="Smith M."/>
            <person name="Steward C.A."/>
            <person name="Swarbreck D."/>
            <person name="Sycamore N."/>
            <person name="Tester J."/>
            <person name="Thorpe A."/>
            <person name="Tracey A."/>
            <person name="Tromans A."/>
            <person name="Thomas D.W."/>
            <person name="Wall M."/>
            <person name="Wallis J.M."/>
            <person name="West A.P."/>
            <person name="Whitehead S.L."/>
            <person name="Willey D.L."/>
            <person name="Williams S.A."/>
            <person name="Wilming L."/>
            <person name="Wray P.W."/>
            <person name="Young L."/>
            <person name="Ashurst J.L."/>
            <person name="Coulson A."/>
            <person name="Blocker H."/>
            <person name="Durbin R.M."/>
            <person name="Sulston J.E."/>
            <person name="Hubbard T."/>
            <person name="Jackson M.J."/>
            <person name="Bentley D.R."/>
            <person name="Beck S."/>
            <person name="Rogers J."/>
            <person name="Dunham I."/>
        </authorList>
    </citation>
    <scope>NUCLEOTIDE SEQUENCE [LARGE SCALE GENOMIC DNA]</scope>
</reference>
<reference key="5">
    <citation type="journal article" date="2004" name="Genome Res.">
        <title>The status, quality, and expansion of the NIH full-length cDNA project: the Mammalian Gene Collection (MGC).</title>
        <authorList>
            <consortium name="The MGC Project Team"/>
        </authorList>
    </citation>
    <scope>NUCLEOTIDE SEQUENCE [LARGE SCALE MRNA] (ISOFORMS 1 AND 2)</scope>
    <source>
        <tissue>Kidney</tissue>
        <tissue>Skin</tissue>
    </source>
</reference>
<reference key="6">
    <citation type="journal article" date="2000" name="J. Biol. Chem.">
        <title>Torsin A and its torsion dystonia-associated mutant forms are lumenal glycoproteins that exhibit distinct subcellular localizations.</title>
        <authorList>
            <person name="Kustedjo K."/>
            <person name="Bracey M.H."/>
            <person name="Cravatt B.F."/>
        </authorList>
    </citation>
    <scope>SUBCELLULAR LOCATION</scope>
    <scope>GLYCOSYLATION AT ASN-143 AND ASN-158</scope>
    <scope>MUTAGENESIS OF ASN-143 AND ASN-158</scope>
</reference>
<reference key="7">
    <citation type="journal article" date="2000" name="Brain Res.">
        <title>Immunohistochemical localization and distribution of torsinA in normal human and rat brain.</title>
        <authorList>
            <person name="Shashidharan P."/>
            <person name="Kramer B.C."/>
            <person name="Walker R.H."/>
            <person name="Olanow C.W."/>
            <person name="Brin M.F."/>
        </authorList>
    </citation>
    <scope>TISSUE SPECIFICITY</scope>
</reference>
<reference key="8">
    <citation type="journal article" date="2004" name="J. Neurochem.">
        <title>TorsinB--perinuclear location and association with torsinA.</title>
        <authorList>
            <person name="Hewett J.W."/>
            <person name="Kamm C."/>
            <person name="Boston H."/>
            <person name="Beauchamp R."/>
            <person name="Naismith T."/>
            <person name="Ozelius L."/>
            <person name="Hanson P.I."/>
            <person name="Breakefield X.O."/>
            <person name="Ramesh V."/>
        </authorList>
    </citation>
    <scope>INTERACTION WITH TOR1B</scope>
    <scope>TISSUE SPECIFICITY</scope>
    <scope>GLYCOSYLATION</scope>
    <scope>SUBCELLULAR LOCATION</scope>
</reference>
<reference key="9">
    <citation type="journal article" date="2004" name="J. Biol. Chem.">
        <title>The early onset dystonia protein torsinA interacts with kinesin light chain 1.</title>
        <authorList>
            <person name="Kamm C."/>
            <person name="Boston H."/>
            <person name="Hewett J."/>
            <person name="Wilbur J."/>
            <person name="Corey D.P."/>
            <person name="Hanson P.I."/>
            <person name="Ramesh V."/>
            <person name="Breakefield X.O."/>
        </authorList>
    </citation>
    <scope>INTERACTION WITH KLC1</scope>
    <scope>TISSUE SPECIFICITY</scope>
    <scope>CHARACTERIZATION OF VARIANT DYT1 GLU-303 DEL</scope>
    <scope>SUBCELLULAR LOCATION</scope>
</reference>
<reference key="10">
    <citation type="journal article" date="2004" name="Proc. Natl. Acad. Sci. U.S.A.">
        <title>Effect of torsinA on membrane proteins reveals a loss of function and a dominant-negative phenotype of the dystonia-associated DeltaE-torsinA mutant.</title>
        <authorList>
            <person name="Torres G.E."/>
            <person name="Sweeney A.L."/>
            <person name="Beaulieu J.M."/>
            <person name="Shashidharan P."/>
            <person name="Caron M.G."/>
        </authorList>
    </citation>
    <scope>FUNCTION IN CELLULAR TRAFFICKING</scope>
    <scope>SUBUNIT</scope>
    <scope>INTERACTION WITH SLC6A3</scope>
    <scope>CHARACTERIZATION OF VARIANT DYT1 GLU-303 DEL</scope>
    <scope>MUTAGENESIS OF LYS-108</scope>
</reference>
<reference key="11">
    <citation type="journal article" date="2005" name="J. Cell Biol.">
        <title>The AAA+ protein torsinA interacts with a conserved domain present in LAP1 and a novel ER protein.</title>
        <authorList>
            <person name="Goodchild R.E."/>
            <person name="Dauer W.T."/>
        </authorList>
    </citation>
    <scope>INTERACTION WITH TOR1AIP1 AND TOR1AIP2</scope>
</reference>
<reference key="12">
    <citation type="journal article" date="2006" name="Neurobiol. Dis.">
        <title>Dystonia-causing mutant torsinA inhibits cell adhesion and neurite extension through interference with cytoskeletal dynamics.</title>
        <authorList>
            <person name="Hewett J.W."/>
            <person name="Zeng J."/>
            <person name="Niland B.P."/>
            <person name="Bragg D.C."/>
            <person name="Breakefield X.O."/>
        </authorList>
    </citation>
    <scope>FUNCTION IN CYTOSKELETON ORGANIZATION</scope>
    <scope>CHARACTERIZATION OF VARIANT DYT1 GLU-303 DEL</scope>
    <scope>SUBCELLULAR LOCATION</scope>
    <scope>INTERACTION WITH VIM</scope>
</reference>
<reference key="13">
    <citation type="journal article" date="2007" name="Biochem. J.">
        <title>Biosynthesis of the dystonia-associated AAA+ ATPase torsinA at the endoplasmic reticulum.</title>
        <authorList>
            <person name="Callan A.C."/>
            <person name="Bunning S."/>
            <person name="Jones O.T."/>
            <person name="High S."/>
            <person name="Swanton E."/>
        </authorList>
    </citation>
    <scope>SUBCELLULAR LOCATION</scope>
    <scope>SIGNAL SEQUENCE CLEAVAGE SITE</scope>
    <scope>GLYCOSYLATION</scope>
    <scope>MUTAGENESIS OF VAL-18; ALA-20 AND VAL-33</scope>
</reference>
<reference key="14">
    <citation type="journal article" date="2007" name="Proc. Natl. Acad. Sci. U.S.A.">
        <title>Mutant torsinA interferes with protein processing through the secretory pathway in DYT1 dystonia cells.</title>
        <authorList>
            <person name="Hewett J.W."/>
            <person name="Tannous B."/>
            <person name="Niland B.P."/>
            <person name="Nery F.C."/>
            <person name="Zeng J."/>
            <person name="Li Y."/>
            <person name="Breakefield X.O."/>
        </authorList>
    </citation>
    <scope>FUNCTION IN PROTEIN PROCESSING</scope>
    <scope>CHARACTERIZATION OF VARIANT DYT1 GLU-303 DEL</scope>
</reference>
<reference key="15">
    <citation type="journal article" date="2008" name="J. Biol. Chem.">
        <title>The dystonia-associated protein torsinA modulates synaptic vesicle recycling.</title>
        <authorList>
            <person name="Granata A."/>
            <person name="Watson R."/>
            <person name="Collinson L.M."/>
            <person name="Schiavo G."/>
            <person name="Warner T.T."/>
        </authorList>
    </citation>
    <scope>FUNCTION IN VESICLE RECYCLING</scope>
    <scope>INTERACTION WITH SNAPIN</scope>
    <scope>CHARACTERIZATION OF VARIANT DYT1 GLU-303 DEL</scope>
</reference>
<reference key="16">
    <citation type="journal article" date="2008" name="J. Cell Sci.">
        <title>TorsinA binds the KASH domain of nesprins and participates in linkage between nuclear envelope and cytoskeleton.</title>
        <authorList>
            <person name="Nery F.C."/>
            <person name="Zeng J."/>
            <person name="Niland B.P."/>
            <person name="Hewett J."/>
            <person name="Farley J."/>
            <person name="Irimia D."/>
            <person name="Li Y."/>
            <person name="Wiche G."/>
            <person name="Sonnenberg A."/>
            <person name="Breakefield X.O."/>
        </authorList>
    </citation>
    <scope>FUNCTION IN NUCLEAR POLARITY</scope>
    <scope>INTERACTION WITH PLEC; SYNE3 AND VIM</scope>
    <scope>CHARACTERIZATION OF VARIANT DYT1 GLU-303 DEL</scope>
</reference>
<reference key="17">
    <citation type="journal article" date="2009" name="J. Biol. Chem.">
        <title>Printor, a novel torsinA-interacting protein implicated in dystonia pathogenesis.</title>
        <authorList>
            <person name="Giles L.M."/>
            <person name="Li L."/>
            <person name="Chin L.S."/>
        </authorList>
    </citation>
    <scope>INTERACTION WITH KLHL14</scope>
    <scope>SUBCELLULAR LOCATION</scope>
    <scope>MUTAGENESIS OF LYS-108 AND GLU-171</scope>
</reference>
<reference key="18">
    <citation type="journal article" date="2009" name="Mol. Biol. Cell">
        <title>LULL1 retargets TorsinA to the nuclear envelope revealing an activity that is impaired by the DYT1 dystonia mutation.</title>
        <authorList>
            <person name="Vander Heyden A.B."/>
            <person name="Naismith T.V."/>
            <person name="Snapp E.L."/>
            <person name="Hodzic D."/>
            <person name="Hanson P.I."/>
        </authorList>
    </citation>
    <scope>FUNCTION</scope>
    <scope>HEXAMERIZATION</scope>
    <scope>SUBCELLULAR LOCATION</scope>
    <scope>MUTAGENESIS OF LYS-108 AND GLU-171</scope>
</reference>
<reference key="19">
    <citation type="journal article" date="2010" name="Cell Stress Chaperones">
        <title>The early-onset torsion dystonia-associated protein, torsinA, displays molecular chaperone activity in vitro.</title>
        <authorList>
            <person name="Burdette A.J."/>
            <person name="Churchill P.F."/>
            <person name="Caldwell G.A."/>
            <person name="Caldwell K.A."/>
        </authorList>
    </citation>
    <scope>FUNCTION AS CHAPERONE</scope>
    <scope>CHARACTERIZATION OF VARIANT DYT1 GLU-303 DEL</scope>
</reference>
<reference key="20">
    <citation type="journal article" date="2010" name="Hum. Mol. Genet.">
        <title>Relative tissue expression of homologous torsinB correlates with the neuronal specific importance of DYT1 dystonia-associated torsinA.</title>
        <authorList>
            <person name="Jungwirth M."/>
            <person name="Dear M.L."/>
            <person name="Brown P."/>
            <person name="Holbrook K."/>
            <person name="Goodchild R."/>
        </authorList>
    </citation>
    <scope>SUBUNIT</scope>
    <scope>MUTAGENESIS OF GLU-171</scope>
</reference>
<reference key="21">
    <citation type="journal article" date="2011" name="BMC Syst. Biol.">
        <title>Initial characterization of the human central proteome.</title>
        <authorList>
            <person name="Burkard T.R."/>
            <person name="Planyavsky M."/>
            <person name="Kaupe I."/>
            <person name="Breitwieser F.P."/>
            <person name="Buerckstuemmer T."/>
            <person name="Bennett K.L."/>
            <person name="Superti-Furga G."/>
            <person name="Colinge J."/>
        </authorList>
    </citation>
    <scope>IDENTIFICATION BY MASS SPECTROMETRY [LARGE SCALE ANALYSIS]</scope>
</reference>
<reference key="22">
    <citation type="journal article" date="2011" name="EMBO J.">
        <title>CSN complex controls the stability of selected synaptic proteins via a torsinA-dependent process.</title>
        <authorList>
            <person name="Granata A."/>
            <person name="Koo S.J."/>
            <person name="Haucke V."/>
            <person name="Schiavo G."/>
            <person name="Warner T.T."/>
        </authorList>
    </citation>
    <scope>INTERACTION WITH CSN4; SNAPIN AND STON2</scope>
    <scope>SUBCELLULAR LOCATION</scope>
    <scope>CHARACTERIZATION OF VARIANT DYT1 GLU-303 DEL</scope>
</reference>
<reference key="23">
    <citation type="journal article" date="2013" name="Proc. Natl. Acad. Sci. U.S.A.">
        <title>Regulation of Torsin ATPases by LAP1 and LULL1.</title>
        <authorList>
            <person name="Zhao C."/>
            <person name="Brown R.S."/>
            <person name="Chase A.R."/>
            <person name="Eisele M.R."/>
            <person name="Schlieker C."/>
        </authorList>
    </citation>
    <scope>FUNCTION</scope>
    <scope>CATALYTIC ACTIVITY</scope>
    <scope>INTERACTION WITH TOR1AIP1 AND TOR1AIP2</scope>
    <scope>CHARACTERIZATION OF VARIANT GLU-303 DEL</scope>
    <scope>MUTAGENESIS OF GLU-171</scope>
</reference>
<reference key="24">
    <citation type="journal article" date="2015" name="Proteomics">
        <title>N-terminome analysis of the human mitochondrial proteome.</title>
        <authorList>
            <person name="Vaca Jacome A.S."/>
            <person name="Rabilloud T."/>
            <person name="Schaeffer-Reiss C."/>
            <person name="Rompais M."/>
            <person name="Ayoub D."/>
            <person name="Lane L."/>
            <person name="Bairoch A."/>
            <person name="Van Dorsselaer A."/>
            <person name="Carapito C."/>
        </authorList>
    </citation>
    <scope>IDENTIFICATION BY MASS SPECTROMETRY [LARGE SCALE ANALYSIS]</scope>
</reference>
<reference key="25">
    <citation type="journal article" date="2017" name="Brain">
        <title>TOR1A variants cause a severe arthrogryposis with developmental delay, strabismus and tremor.</title>
        <authorList>
            <person name="Kariminejad A."/>
            <person name="Dahl-Halvarsson M."/>
            <person name="Ravenscroft G."/>
            <person name="Afroozan F."/>
            <person name="Keshavarz E."/>
            <person name="Goullee H."/>
            <person name="Davis M.R."/>
            <person name="Faraji Zonooz M."/>
            <person name="Najmabadi H."/>
            <person name="Laing N.G."/>
            <person name="Tajsharghi H."/>
        </authorList>
    </citation>
    <scope>INVOLVEMENT IN AMC5</scope>
    <scope>VARIANTS AMC5 GLU-303 DEL AND SER-318</scope>
    <scope>CHARACTERIZATION OF VARIANT AMC5 SER-318</scope>
    <scope>SUBCELLULAR LOCATION</scope>
</reference>
<reference key="26">
    <citation type="journal article" date="2016" name="Elife">
        <title>Structures of TorsinA and its disease-mutant complexed with an activator reveal the molecular basis for primary dystonia.</title>
        <authorList>
            <person name="Demircioglu F.E."/>
            <person name="Sosa B.A."/>
            <person name="Ingram J."/>
            <person name="Ploegh H.L."/>
            <person name="Schwartz T.U."/>
        </authorList>
    </citation>
    <scope>X-RAY CRYSTALLOGRAPHY (1.40 ANGSTROMS) OF 51-332 IN COMPLEX WITH TOR1AIP2</scope>
    <scope>CHARACTERIZATION OF VARIANT DYT1 GLU-303 DEL</scope>
    <scope>MUTAGENESIS OF GLU-171</scope>
</reference>
<reference key="27">
    <citation type="journal article" date="2001" name="Neurogenetics">
        <title>Novel mutation in the TOR1A (DYT1) gene in atypical early onset dystonia and polymorphisms in dystonia and early onset parkinsonism.</title>
        <authorList>
            <person name="Leung J.C."/>
            <person name="Klein C."/>
            <person name="Friedman J."/>
            <person name="Vieregge P."/>
            <person name="Jacobs H."/>
            <person name="Doheny D."/>
            <person name="Kamm C."/>
            <person name="DeLeon D."/>
            <person name="Pramstaller P.P."/>
            <person name="Penney J.B."/>
            <person name="Eisengart M."/>
            <person name="Jankovic J."/>
            <person name="Gasser T."/>
            <person name="Bressman S.B."/>
            <person name="Corey D.P."/>
            <person name="Kramer P."/>
            <person name="Brin M.F."/>
            <person name="Ozelius L.J."/>
            <person name="Breakefield X.O."/>
        </authorList>
    </citation>
    <scope>VARIANT 323-PHE--TYR-328 DEL</scope>
</reference>
<reference key="28">
    <citation type="journal article" date="2008" name="J. Neurol. Neurosurg. Psych.">
        <title>Novel TOR1A mutation p.Arg288Gln in early-onset dystonia (DYT1).</title>
        <authorList>
            <person name="Zirn B."/>
            <person name="Grundmann K."/>
            <person name="Huppke P."/>
            <person name="Puthenparampil J."/>
            <person name="Wolburg H."/>
            <person name="Riess O."/>
            <person name="Muller U."/>
        </authorList>
    </citation>
    <scope>VARIANT DYT1 GLN-288</scope>
    <scope>CHARACTERIZATION OF VARIANTS DYT1 GLN-288 AND GLU-303 DEL</scope>
</reference>
<reference key="29">
    <citation type="journal article" date="2010" name="J. Med. Genet.">
        <title>Functional evidence implicating a novel TOR1A mutation in idiopathic, late-onset focal dystonia.</title>
        <authorList>
            <person name="Calakos N."/>
            <person name="Patel V.D."/>
            <person name="Gottron M."/>
            <person name="Wang G."/>
            <person name="Tran-Viet K.N."/>
            <person name="Brewington D."/>
            <person name="Beyer J.L."/>
            <person name="Steffens D.C."/>
            <person name="Krishnan R.R."/>
            <person name="Zuechner S."/>
        </authorList>
    </citation>
    <scope>VARIANT DYT1 ILE-205</scope>
    <scope>CHARACTERIZATION OF VARIANTS DYT1 ILE-205 AND GLU-303 DEL</scope>
</reference>
<reference key="30">
    <citation type="journal article" date="2014" name="Hum. Mutat.">
        <title>Biochemical and cellular analysis of human variants of the DYT1 dystonia protein, TorsinA/TOR1A.</title>
        <authorList>
            <person name="Hettich J."/>
            <person name="Ryan S.D."/>
            <person name="de Souza O.N."/>
            <person name="Saraiva Macedo Timmers L.F."/>
            <person name="Tsai S."/>
            <person name="Atai N.A."/>
            <person name="da Hora C.C."/>
            <person name="Zhang X."/>
            <person name="Kothary R."/>
            <person name="Snapp E."/>
            <person name="Ericsson M."/>
            <person name="Grundmann K."/>
            <person name="Breakefield X.O."/>
            <person name="Nery F.C."/>
        </authorList>
    </citation>
    <scope>CHARACTERIZATION OF VARIANTS DYT1 ILE-205; GLN-288 AND GLU-303 DEL</scope>
    <scope>FUNCTION</scope>
    <scope>SUBUNIT</scope>
</reference>
<reference key="31">
    <citation type="journal article" date="2017" name="Acta Neurol. Scand.">
        <title>New THAP1 mutation and role of putative modifier in TOR1A.</title>
        <authorList>
            <person name="Piovesana L.G."/>
            <person name="Torres F.R."/>
            <person name="Azevedo P.C."/>
            <person name="Amaral T.P."/>
            <person name="Lopes-Cendes I."/>
            <person name="D'Abreu A."/>
        </authorList>
    </citation>
    <scope>VARIANT HIS-216</scope>
</reference>
<reference key="32">
    <citation type="journal article" date="2017" name="Neurol. Genet.">
        <title>Biallelic TOR1A variants in an infant with severe arthrogryposis.</title>
        <authorList>
            <person name="Reichert S.C."/>
            <person name="Gonzalez-Alegre P."/>
            <person name="Scharer G.H."/>
        </authorList>
    </citation>
    <scope>VARIANT AMC5 GLU-303 DEL</scope>
</reference>
<reference key="33">
    <citation type="journal article" date="2019" name="Eur. J. Med. Genet.">
        <title>Biallelic TOR1A mutations cause severe arthrogryposis: A case requiring reverse phenotyping.</title>
        <authorList>
            <person name="Isik E."/>
            <person name="Aykut A."/>
            <person name="Atik T."/>
            <person name="Cogulu O."/>
            <person name="Ozkinay F."/>
        </authorList>
    </citation>
    <scope>VARIANT AMC5 288-ARG--ASP-332 DEL</scope>
</reference>
<comment type="function">
    <text evidence="7 9 11 12 14 15 19 21 22">Protein with chaperone functions important for the control of protein folding, processing, stability and localization as well as for the reduction of misfolded protein aggregates. Involved in the regulation of synaptic vesicle recycling, controls STON2 protein stability in collaboration with the COP9 signalosome complex (CSN). In the nucleus, may link the cytoskeleton with the nuclear envelope, this mechanism seems to be crucial for the control of nuclear polarity, cell movement and, specifically in neurons, nuclear envelope integrity. Participates in the cellular trafficking and may regulate the subcellular location of multipass membrane proteins such as the dopamine transporter SLC6A3, leading to the modulation of dopamine neurotransmission. In the endoplasmic reticulum, plays a role in the quality control of protein folding by increasing clearance of misfolded proteins such as SGCE variants or holding them in an intermediate state for proper refolding. May have a redundant function with TOR1B in non-neural tissues.</text>
</comment>
<comment type="catalytic activity">
    <reaction evidence="21">
        <text>ATP + H2O = ADP + phosphate + H(+)</text>
        <dbReference type="Rhea" id="RHEA:13065"/>
        <dbReference type="ChEBI" id="CHEBI:15377"/>
        <dbReference type="ChEBI" id="CHEBI:15378"/>
        <dbReference type="ChEBI" id="CHEBI:30616"/>
        <dbReference type="ChEBI" id="CHEBI:43474"/>
        <dbReference type="ChEBI" id="CHEBI:456216"/>
    </reaction>
</comment>
<comment type="subunit">
    <text evidence="5 6 7 8 9 12 14 16 18 20 21 22 24">Homohexamer. Interacts with TOR1B; the interaction may be specific of neural tissues. Interacts (ATP-bound) with TOR1AIP1 and TOR1AIP2; the interactions induce ATPase activity. Interacts with KLHL14; preferentially when ATP-free. Interacts with KLC1 (via TPR repeats); the interaction associates TOR1A with the kinesin oligomeric complex. Interacts with COPS4; the interaction associates TOR1A with the CSN complex. Interacts with SNAPIN; the interaction is direct and associates SNAPIN with the CSN complex. Interacts with STON2. Interacts (ATP-bound) with SYNE3 (via KASH domain); the interaction is required for SYNE3 nuclear envelope localization. Interacts with VIM; the interaction associates TOR1A with the cytoskeleton. Interacts with PLEC. Interacts (ATP-bound) with SLC6A3; regulates SLC6A3 transport to the plasma membrane.</text>
</comment>
<comment type="interaction">
    <interactant intactId="EBI-524257">
        <id>O14656</id>
    </interactant>
    <interactant intactId="EBI-22011868">
        <id>Q6PCB6</id>
        <label>ABHD17C</label>
    </interactant>
    <organismsDiffer>false</organismsDiffer>
    <experiments>3</experiments>
</comment>
<comment type="interaction">
    <interactant intactId="EBI-524257">
        <id>O14656</id>
    </interactant>
    <interactant intactId="EBI-77613">
        <id>P05067</id>
        <label>APP</label>
    </interactant>
    <organismsDiffer>false</organismsDiffer>
    <experiments>3</experiments>
</comment>
<comment type="interaction">
    <interactant intactId="EBI-524257">
        <id>O14656</id>
    </interactant>
    <interactant intactId="EBI-9089489">
        <id>Q96FT7-4</id>
        <label>ASIC4</label>
    </interactant>
    <organismsDiffer>false</organismsDiffer>
    <experiments>3</experiments>
</comment>
<comment type="interaction">
    <interactant intactId="EBI-524257">
        <id>O14656</id>
    </interactant>
    <interactant intactId="EBI-350590">
        <id>Q9UNS2</id>
        <label>COPS3</label>
    </interactant>
    <organismsDiffer>false</organismsDiffer>
    <experiments>3</experiments>
</comment>
<comment type="interaction">
    <interactant intactId="EBI-524257">
        <id>O14656</id>
    </interactant>
    <interactant intactId="EBI-2831948">
        <id>P22692</id>
        <label>IGFBP4</label>
    </interactant>
    <organismsDiffer>false</organismsDiffer>
    <experiments>3</experiments>
</comment>
<comment type="interaction">
    <interactant intactId="EBI-524257">
        <id>O14656</id>
    </interactant>
    <interactant intactId="EBI-10172290">
        <id>P60409</id>
        <label>KRTAP10-7</label>
    </interactant>
    <organismsDiffer>false</organismsDiffer>
    <experiments>6</experiments>
</comment>
<comment type="interaction">
    <interactant intactId="EBI-524257">
        <id>O14656</id>
    </interactant>
    <interactant intactId="EBI-724076">
        <id>Q99750</id>
        <label>MDFI</label>
    </interactant>
    <organismsDiffer>false</organismsDiffer>
    <experiments>3</experiments>
</comment>
<comment type="interaction">
    <interactant intactId="EBI-524257">
        <id>O14656</id>
    </interactant>
    <interactant intactId="EBI-2559665">
        <id>Q5JTV8</id>
        <label>TOR1AIP1</label>
    </interactant>
    <organismsDiffer>false</organismsDiffer>
    <experiments>2</experiments>
</comment>
<comment type="interaction">
    <interactant intactId="EBI-524257">
        <id>O14656</id>
    </interactant>
    <interactant intactId="EBI-524567">
        <id>Q8NFQ8</id>
        <label>TOR1AIP2</label>
    </interactant>
    <organismsDiffer>false</organismsDiffer>
    <experiments>4</experiments>
</comment>
<comment type="interaction">
    <interactant intactId="EBI-25847109">
        <id>O14656-2</id>
    </interactant>
    <interactant intactId="EBI-22011868">
        <id>Q6PCB6</id>
        <label>ABHD17C</label>
    </interactant>
    <organismsDiffer>false</organismsDiffer>
    <experiments>3</experiments>
</comment>
<comment type="interaction">
    <interactant intactId="EBI-25847109">
        <id>O14656-2</id>
    </interactant>
    <interactant intactId="EBI-11529439">
        <id>P63010-2</id>
        <label>AP2B1</label>
    </interactant>
    <organismsDiffer>false</organismsDiffer>
    <experiments>3</experiments>
</comment>
<comment type="interaction">
    <interactant intactId="EBI-25847109">
        <id>O14656-2</id>
    </interactant>
    <interactant intactId="EBI-77613">
        <id>P05067</id>
        <label>APP</label>
    </interactant>
    <organismsDiffer>false</organismsDiffer>
    <experiments>3</experiments>
</comment>
<comment type="interaction">
    <interactant intactId="EBI-25847109">
        <id>O14656-2</id>
    </interactant>
    <interactant intactId="EBI-718459">
        <id>Q9UII2</id>
        <label>ATP5IF1</label>
    </interactant>
    <organismsDiffer>false</organismsDiffer>
    <experiments>3</experiments>
</comment>
<comment type="interaction">
    <interactant intactId="EBI-25847109">
        <id>O14656-2</id>
    </interactant>
    <interactant intactId="EBI-396137">
        <id>Q9UJX2</id>
        <label>CDC23</label>
    </interactant>
    <organismsDiffer>false</organismsDiffer>
    <experiments>3</experiments>
</comment>
<comment type="interaction">
    <interactant intactId="EBI-25847109">
        <id>O14656-2</id>
    </interactant>
    <interactant intactId="EBI-747776">
        <id>Q53EZ4</id>
        <label>CEP55</label>
    </interactant>
    <organismsDiffer>false</organismsDiffer>
    <experiments>3</experiments>
</comment>
<comment type="interaction">
    <interactant intactId="EBI-25847109">
        <id>O14656-2</id>
    </interactant>
    <interactant intactId="EBI-1049648">
        <id>Q96FZ7</id>
        <label>CHMP6</label>
    </interactant>
    <organismsDiffer>false</organismsDiffer>
    <experiments>3</experiments>
</comment>
<comment type="interaction">
    <interactant intactId="EBI-25847109">
        <id>O14656-2</id>
    </interactant>
    <interactant intactId="EBI-13350535">
        <id>Q92478</id>
        <label>CLEC2B</label>
    </interactant>
    <organismsDiffer>false</organismsDiffer>
    <experiments>3</experiments>
</comment>
<comment type="interaction">
    <interactant intactId="EBI-25847109">
        <id>O14656-2</id>
    </interactant>
    <interactant intactId="EBI-491549">
        <id>P35222</id>
        <label>CTNNB1</label>
    </interactant>
    <organismsDiffer>false</organismsDiffer>
    <experiments>3</experiments>
</comment>
<comment type="interaction">
    <interactant intactId="EBI-25847109">
        <id>O14656-2</id>
    </interactant>
    <interactant intactId="EBI-25830216">
        <id>Q9NR90-2</id>
        <label>DAZ3</label>
    </interactant>
    <organismsDiffer>false</organismsDiffer>
    <experiments>3</experiments>
</comment>
<comment type="interaction">
    <interactant intactId="EBI-25847109">
        <id>O14656-2</id>
    </interactant>
    <interactant intactId="EBI-347658">
        <id>Q9UHI6</id>
        <label>DDX20</label>
    </interactant>
    <organismsDiffer>false</organismsDiffer>
    <experiments>3</experiments>
</comment>
<comment type="interaction">
    <interactant intactId="EBI-25847109">
        <id>O14656-2</id>
    </interactant>
    <interactant intactId="EBI-2805660">
        <id>Q14154</id>
        <label>DELE1</label>
    </interactant>
    <organismsDiffer>false</organismsDiffer>
    <experiments>3</experiments>
</comment>
<comment type="interaction">
    <interactant intactId="EBI-25847109">
        <id>O14656-2</id>
    </interactant>
    <interactant intactId="EBI-2795449">
        <id>Q9H147</id>
        <label>DNTTIP1</label>
    </interactant>
    <organismsDiffer>false</organismsDiffer>
    <experiments>3</experiments>
</comment>
<comment type="interaction">
    <interactant intactId="EBI-25847109">
        <id>O14656-2</id>
    </interactant>
    <interactant intactId="EBI-6393536">
        <id>O75616</id>
        <label>ERAL1</label>
    </interactant>
    <organismsDiffer>false</organismsDiffer>
    <experiments>3</experiments>
</comment>
<comment type="interaction">
    <interactant intactId="EBI-25847109">
        <id>O14656-2</id>
    </interactant>
    <interactant intactId="EBI-6448852">
        <id>Q9UI08-2</id>
        <label>EVL</label>
    </interactant>
    <organismsDiffer>false</organismsDiffer>
    <experiments>3</experiments>
</comment>
<comment type="interaction">
    <interactant intactId="EBI-25847109">
        <id>O14656-2</id>
    </interactant>
    <interactant intactId="EBI-10253815">
        <id>Q6PIV2</id>
        <label>FOXR1</label>
    </interactant>
    <organismsDiffer>false</organismsDiffer>
    <experiments>3</experiments>
</comment>
<comment type="interaction">
    <interactant intactId="EBI-25847109">
        <id>O14656-2</id>
    </interactant>
    <interactant intactId="EBI-4403434">
        <id>Q9H4A5</id>
        <label>GOLPH3L</label>
    </interactant>
    <organismsDiffer>false</organismsDiffer>
    <experiments>3</experiments>
</comment>
<comment type="interaction">
    <interactant intactId="EBI-25847109">
        <id>O14656-2</id>
    </interactant>
    <interactant intactId="EBI-1199859">
        <id>P0C0S5</id>
        <label>H2AZ1</label>
    </interactant>
    <organismsDiffer>false</organismsDiffer>
    <experiments>3</experiments>
</comment>
<comment type="interaction">
    <interactant intactId="EBI-25847109">
        <id>O14656-2</id>
    </interactant>
    <interactant intactId="EBI-21911304">
        <id>Q6DN90-2</id>
        <label>IQSEC1</label>
    </interactant>
    <organismsDiffer>false</organismsDiffer>
    <experiments>3</experiments>
</comment>
<comment type="interaction">
    <interactant intactId="EBI-25847109">
        <id>O14656-2</id>
    </interactant>
    <interactant intactId="EBI-10220600">
        <id>Q8NA54</id>
        <label>IQUB</label>
    </interactant>
    <organismsDiffer>false</organismsDiffer>
    <experiments>3</experiments>
</comment>
<comment type="interaction">
    <interactant intactId="EBI-25847109">
        <id>O14656-2</id>
    </interactant>
    <interactant intactId="EBI-399080">
        <id>Q92993</id>
        <label>KAT5</label>
    </interactant>
    <organismsDiffer>false</organismsDiffer>
    <experiments>3</experiments>
</comment>
<comment type="interaction">
    <interactant intactId="EBI-25847109">
        <id>O14656-2</id>
    </interactant>
    <interactant intactId="EBI-12811111">
        <id>Q8IUB9</id>
        <label>KRTAP19-1</label>
    </interactant>
    <organismsDiffer>false</organismsDiffer>
    <experiments>3</experiments>
</comment>
<comment type="interaction">
    <interactant intactId="EBI-25847109">
        <id>O14656-2</id>
    </interactant>
    <interactant intactId="EBI-9088215">
        <id>A2RU56</id>
        <label>LOC401296</label>
    </interactant>
    <organismsDiffer>false</organismsDiffer>
    <experiments>3</experiments>
</comment>
<comment type="interaction">
    <interactant intactId="EBI-25847109">
        <id>O14656-2</id>
    </interactant>
    <interactant intactId="EBI-4397720">
        <id>Q8TDB4</id>
        <label>MGARP</label>
    </interactant>
    <organismsDiffer>false</organismsDiffer>
    <experiments>3</experiments>
</comment>
<comment type="interaction">
    <interactant intactId="EBI-25847109">
        <id>O14656-2</id>
    </interactant>
    <interactant intactId="EBI-2829677">
        <id>P41218</id>
        <label>MNDA</label>
    </interactant>
    <organismsDiffer>false</organismsDiffer>
    <experiments>3</experiments>
</comment>
<comment type="interaction">
    <interactant intactId="EBI-25847109">
        <id>O14656-2</id>
    </interactant>
    <interactant intactId="EBI-995714">
        <id>Q9Y605</id>
        <label>MRFAP1</label>
    </interactant>
    <organismsDiffer>false</organismsDiffer>
    <experiments>3</experiments>
</comment>
<comment type="interaction">
    <interactant intactId="EBI-25847109">
        <id>O14656-2</id>
    </interactant>
    <interactant intactId="EBI-25844576">
        <id>O43196-2</id>
        <label>MSH5</label>
    </interactant>
    <organismsDiffer>false</organismsDiffer>
    <experiments>3</experiments>
</comment>
<comment type="interaction">
    <interactant intactId="EBI-25847109">
        <id>O14656-2</id>
    </interactant>
    <interactant intactId="EBI-744871">
        <id>O00746</id>
        <label>NME4</label>
    </interactant>
    <organismsDiffer>false</organismsDiffer>
    <experiments>3</experiments>
</comment>
<comment type="interaction">
    <interactant intactId="EBI-25847109">
        <id>O14656-2</id>
    </interactant>
    <interactant intactId="EBI-9091423">
        <id>Q96CV9-2</id>
        <label>OPTN</label>
    </interactant>
    <organismsDiffer>false</organismsDiffer>
    <experiments>3</experiments>
</comment>
<comment type="interaction">
    <interactant intactId="EBI-25847109">
        <id>O14656-2</id>
    </interactant>
    <interactant intactId="EBI-1164361">
        <id>Q99497</id>
        <label>PARK7</label>
    </interactant>
    <organismsDiffer>false</organismsDiffer>
    <experiments>3</experiments>
</comment>
<comment type="interaction">
    <interactant intactId="EBI-25847109">
        <id>O14656-2</id>
    </interactant>
    <interactant intactId="EBI-716063">
        <id>Q13113</id>
        <label>PDZK1IP1</label>
    </interactant>
    <organismsDiffer>false</organismsDiffer>
    <experiments>3</experiments>
</comment>
<comment type="interaction">
    <interactant intactId="EBI-25847109">
        <id>O14656-2</id>
    </interactant>
    <interactant intactId="EBI-9090282">
        <id>P27986-2</id>
        <label>PIK3R1</label>
    </interactant>
    <organismsDiffer>false</organismsDiffer>
    <experiments>3</experiments>
</comment>
<comment type="interaction">
    <interactant intactId="EBI-25847109">
        <id>O14656-2</id>
    </interactant>
    <interactant intactId="EBI-1049746">
        <id>P12273</id>
        <label>PIP</label>
    </interactant>
    <organismsDiffer>false</organismsDiffer>
    <experiments>3</experiments>
</comment>
<comment type="interaction">
    <interactant intactId="EBI-25847109">
        <id>O14656-2</id>
    </interactant>
    <interactant intactId="EBI-25829882">
        <id>O75626-3</id>
        <label>PRDM1</label>
    </interactant>
    <organismsDiffer>false</organismsDiffer>
    <experiments>3</experiments>
</comment>
<comment type="interaction">
    <interactant intactId="EBI-25847109">
        <id>O14656-2</id>
    </interactant>
    <interactant intactId="EBI-6552718">
        <id>P57729</id>
        <label>RAB38</label>
    </interactant>
    <organismsDiffer>false</organismsDiffer>
    <experiments>3</experiments>
</comment>
<comment type="interaction">
    <interactant intactId="EBI-25847109">
        <id>O14656-2</id>
    </interactant>
    <interactant intactId="EBI-11984839">
        <id>Q96QF0-7</id>
        <label>RAB3IP</label>
    </interactant>
    <organismsDiffer>false</organismsDiffer>
    <experiments>3</experiments>
</comment>
<comment type="interaction">
    <interactant intactId="EBI-25847109">
        <id>O14656-2</id>
    </interactant>
    <interactant intactId="EBI-25837959">
        <id>Q9BY12-3</id>
        <label>SCAPER</label>
    </interactant>
    <organismsDiffer>false</organismsDiffer>
    <experiments>3</experiments>
</comment>
<comment type="interaction">
    <interactant intactId="EBI-25847109">
        <id>O14656-2</id>
    </interactant>
    <interactant intactId="EBI-11525407">
        <id>Q15019-3</id>
        <label>SEPTIN2</label>
    </interactant>
    <organismsDiffer>false</organismsDiffer>
    <experiments>3</experiments>
</comment>
<comment type="interaction">
    <interactant intactId="EBI-25847109">
        <id>O14656-2</id>
    </interactant>
    <interactant intactId="EBI-25845274">
        <id>Q9NQ40</id>
        <label>SLC52A3</label>
    </interactant>
    <organismsDiffer>false</organismsDiffer>
    <experiments>3</experiments>
</comment>
<comment type="interaction">
    <interactant intactId="EBI-25847109">
        <id>O14656-2</id>
    </interactant>
    <interactant intactId="EBI-358419">
        <id>Q12824</id>
        <label>SMARCB1</label>
    </interactant>
    <organismsDiffer>false</organismsDiffer>
    <experiments>3</experiments>
</comment>
<comment type="interaction">
    <interactant intactId="EBI-25847109">
        <id>O14656-2</id>
    </interactant>
    <interactant intactId="EBI-25845337">
        <id>Q05C28</id>
        <label>SPACA3</label>
    </interactant>
    <organismsDiffer>false</organismsDiffer>
    <experiments>3</experiments>
</comment>
<comment type="interaction">
    <interactant intactId="EBI-25847109">
        <id>O14656-2</id>
    </interactant>
    <interactant intactId="EBI-10696971">
        <id>Q7Z6I5</id>
        <label>SPATA12</label>
    </interactant>
    <organismsDiffer>false</organismsDiffer>
    <experiments>3</experiments>
</comment>
<comment type="interaction">
    <interactant intactId="EBI-25847109">
        <id>O14656-2</id>
    </interactant>
    <interactant intactId="EBI-714135">
        <id>O75558</id>
        <label>STX11</label>
    </interactant>
    <organismsDiffer>false</organismsDiffer>
    <experiments>3</experiments>
</comment>
<comment type="interaction">
    <interactant intactId="EBI-25847109">
        <id>O14656-2</id>
    </interactant>
    <interactant intactId="EBI-25842075">
        <id>P21980-2</id>
        <label>TGM2</label>
    </interactant>
    <organismsDiffer>false</organismsDiffer>
    <experiments>3</experiments>
</comment>
<comment type="interaction">
    <interactant intactId="EBI-25847109">
        <id>O14656-2</id>
    </interactant>
    <interactant intactId="EBI-3650647">
        <id>Q9BUZ4</id>
        <label>TRAF4</label>
    </interactant>
    <organismsDiffer>false</organismsDiffer>
    <experiments>3</experiments>
</comment>
<comment type="interaction">
    <interactant intactId="EBI-25847109">
        <id>O14656-2</id>
    </interactant>
    <interactant intactId="EBI-21894090">
        <id>Q9NX07-2</id>
        <label>TRNAU1AP</label>
    </interactant>
    <organismsDiffer>false</organismsDiffer>
    <experiments>3</experiments>
</comment>
<comment type="interaction">
    <interactant intactId="EBI-25847109">
        <id>O14656-2</id>
    </interactant>
    <interactant intactId="EBI-723434">
        <id>Q5JTY5</id>
        <label>ZNG1C</label>
    </interactant>
    <organismsDiffer>false</organismsDiffer>
    <experiments>3</experiments>
</comment>
<comment type="subcellular location">
    <subcellularLocation>
        <location evidence="26">Endoplasmic reticulum lumen</location>
    </subcellularLocation>
    <subcellularLocation>
        <location evidence="5 26">Nucleus membrane</location>
        <topology evidence="30">Peripheral membrane protein</topology>
    </subcellularLocation>
    <subcellularLocation>
        <location evidence="1">Cell projection</location>
        <location evidence="1">Growth cone</location>
    </subcellularLocation>
    <subcellularLocation>
        <location evidence="1">Cytoplasmic vesicle membrane</location>
    </subcellularLocation>
    <subcellularLocation>
        <location evidence="1">Cytoplasmic vesicle</location>
        <location evidence="1">Secretory vesicle</location>
    </subcellularLocation>
    <subcellularLocation>
        <location>Cytoplasmic vesicle</location>
        <location>Secretory vesicle</location>
        <location>Synaptic vesicle</location>
    </subcellularLocation>
    <subcellularLocation>
        <location>Cytoplasm</location>
        <location>Cytoskeleton</location>
    </subcellularLocation>
    <text evidence="1">Upon oxidative stress, redistributes to protusions from the cell surface (By similarity). Peripherally associated with the inner face of the ER membrane, probably mediated by the interaction with TOR1AIP1. The association with nucleus membrane is mediated by the interaction with TOR1AIP2.</text>
</comment>
<comment type="alternative products">
    <event type="alternative splicing"/>
    <isoform>
        <id>O14656-1</id>
        <name>1</name>
        <sequence type="displayed"/>
    </isoform>
    <isoform>
        <id>O14656-2</id>
        <name>2</name>
        <sequence type="described" ref="VSP_026605"/>
    </isoform>
</comment>
<comment type="tissue specificity">
    <text evidence="2 5 6">Widely expressed. Highest levels in kidney and liver. In the brain, high levels found in the dopaminergic neurons of the substantia nigra pars compacta, as well as in the neocortex, hippocampus and cerebellum. Also highly expressed in the spinal cord.</text>
</comment>
<comment type="PTM">
    <text evidence="3 6 10">N-glycosylated.</text>
</comment>
<comment type="disease" evidence="5 7 9 11 12 13 14 17 19 20 22 24 28">
    <disease id="DI-00413">
        <name>Dystonia 1, torsion, autosomal dominant</name>
        <acronym>DYT1</acronym>
        <description>A primary torsion dystonia, and the most common and severe form. Dystonia is defined by the presence of sustained involuntary muscle contractions, often leading to abnormal postures. Dystonia type 1 is characterized by involuntary, repetitive, sustained muscle contractions or postures involving one or more sites of the body, in the absence of other neurological symptoms. Typically, symptoms develop first in an arm or leg in middle to late childhood and progress in approximately 30% of patients to other body regions (generalized dystonia) within about five years. 'Torsion' refers to the twisting nature of body movements observed in DYT1, often affecting the trunk. Distribution and severity of symptoms vary widely between affected individuals, ranging from mild focal dystonia to severe generalized dystonia, even within families.</description>
        <dbReference type="MIM" id="128100"/>
    </disease>
    <text>The disease is caused by variants affecting the gene represented in this entry.</text>
</comment>
<comment type="disease" evidence="25 26 27">
    <disease id="DI-05874">
        <name>Arthrogryposis multiplex congenita 5</name>
        <acronym>AMC5</acronym>
        <description>A form of arthrogryposis multiplex congenita, a developmental condition characterized by multiple joint contractures resulting from reduced or absent fetal movements. AMC5 is an autosomal recessive form characterized by severe congenital contractures, developmental delay, strabismus and tremor.</description>
        <dbReference type="MIM" id="618947"/>
    </disease>
    <text>The disease is caused by variants affecting the gene represented in this entry.</text>
</comment>
<comment type="similarity">
    <text evidence="30">Belongs to the ClpA/ClpB family. Torsin subfamily.</text>
</comment>
<sequence length="332" mass="37809">MKLGRAVLGLLLLAPSVVQAVEPISLGLALAGVLTGYIYPRLYCLFAECCGQKRSLSREALQKDLDDNLFGQHLAKKIILNAVFGFINNPKPKKPLTLSLHGWTGTGKNFVSKIIAENIYEGGLNSDYVHLFVATLHFPHASNITLYKDQLQLWIRGNVSACARSIFIFDEMDKMHAGLIDAIKPFLDYYDLVDGVSYQKAMFIFLSNAGAERITDVALDFWRSGKQREDIKLKDIEHALSVSVFNNKNSGFWHSSLIDRNLIDYFVPFLPLEYKHLKMCIRVEMQSRGYEIDEDIVSRVAEEMTFFPKEERVFSDKGCKTVFTKLDYYYDD</sequence>
<protein>
    <recommendedName>
        <fullName>Torsin-1A</fullName>
    </recommendedName>
    <alternativeName>
        <fullName>Dystonia 1 protein</fullName>
    </alternativeName>
    <alternativeName>
        <fullName>Torsin ATPase-1A</fullName>
        <ecNumber>3.6.4.-</ecNumber>
    </alternativeName>
    <alternativeName>
        <fullName>Torsin family 1 member A</fullName>
    </alternativeName>
</protein>
<evidence type="ECO:0000250" key="1"/>
<evidence type="ECO:0000269" key="2">
    <source>
    </source>
</evidence>
<evidence type="ECO:0000269" key="3">
    <source>
    </source>
</evidence>
<evidence type="ECO:0000269" key="4">
    <source>
    </source>
</evidence>
<evidence type="ECO:0000269" key="5">
    <source>
    </source>
</evidence>
<evidence type="ECO:0000269" key="6">
    <source>
    </source>
</evidence>
<evidence type="ECO:0000269" key="7">
    <source>
    </source>
</evidence>
<evidence type="ECO:0000269" key="8">
    <source>
    </source>
</evidence>
<evidence type="ECO:0000269" key="9">
    <source>
    </source>
</evidence>
<evidence type="ECO:0000269" key="10">
    <source>
    </source>
</evidence>
<evidence type="ECO:0000269" key="11">
    <source>
    </source>
</evidence>
<evidence type="ECO:0000269" key="12">
    <source>
    </source>
</evidence>
<evidence type="ECO:0000269" key="13">
    <source>
    </source>
</evidence>
<evidence type="ECO:0000269" key="14">
    <source>
    </source>
</evidence>
<evidence type="ECO:0000269" key="15">
    <source>
    </source>
</evidence>
<evidence type="ECO:0000269" key="16">
    <source>
    </source>
</evidence>
<evidence type="ECO:0000269" key="17">
    <source>
    </source>
</evidence>
<evidence type="ECO:0000269" key="18">
    <source>
    </source>
</evidence>
<evidence type="ECO:0000269" key="19">
    <source>
    </source>
</evidence>
<evidence type="ECO:0000269" key="20">
    <source>
    </source>
</evidence>
<evidence type="ECO:0000269" key="21">
    <source>
    </source>
</evidence>
<evidence type="ECO:0000269" key="22">
    <source>
    </source>
</evidence>
<evidence type="ECO:0000269" key="23">
    <source>
    </source>
</evidence>
<evidence type="ECO:0000269" key="24">
    <source>
    </source>
</evidence>
<evidence type="ECO:0000269" key="25">
    <source>
    </source>
</evidence>
<evidence type="ECO:0000269" key="26">
    <source>
    </source>
</evidence>
<evidence type="ECO:0000269" key="27">
    <source>
    </source>
</evidence>
<evidence type="ECO:0000269" key="28">
    <source>
    </source>
</evidence>
<evidence type="ECO:0000303" key="29">
    <source>
    </source>
</evidence>
<evidence type="ECO:0000305" key="30"/>
<evidence type="ECO:0000305" key="31">
    <source>
    </source>
</evidence>
<evidence type="ECO:0007829" key="32">
    <source>
        <dbReference type="PDB" id="5J1S"/>
    </source>
</evidence>
<name>TOR1A_HUMAN</name>
<feature type="signal peptide" evidence="31">
    <location>
        <begin position="1"/>
        <end position="20"/>
    </location>
</feature>
<feature type="chain" id="PRO_0000005506" description="Torsin-1A">
    <location>
        <begin position="21"/>
        <end position="332"/>
    </location>
</feature>
<feature type="region of interest" description="Interaction with SNAPIN">
    <location>
        <begin position="91"/>
        <end position="251"/>
    </location>
</feature>
<feature type="region of interest" description="Interaction with KLC1" evidence="5">
    <location>
        <begin position="251"/>
        <end position="332"/>
    </location>
</feature>
<feature type="region of interest" description="Interaction with SYNE3" evidence="14">
    <location>
        <begin position="312"/>
        <end position="332"/>
    </location>
</feature>
<feature type="binding site">
    <location>
        <begin position="102"/>
        <end position="109"/>
    </location>
    <ligand>
        <name>ATP</name>
        <dbReference type="ChEBI" id="CHEBI:30616"/>
    </ligand>
</feature>
<feature type="glycosylation site" description="N-linked (GlcNAc...) (high mannose) asparagine" evidence="3">
    <location>
        <position position="143"/>
    </location>
</feature>
<feature type="glycosylation site" description="N-linked (GlcNAc...) (high mannose) asparagine" evidence="3">
    <location>
        <position position="158"/>
    </location>
</feature>
<feature type="splice variant" id="VSP_026605" description="In isoform 2." evidence="29">
    <original>DQLQLWIRGNVSACARSIFIFDEMDKMHAGLIDAIKPFLDYYDLVDGVSYQKAMFIFLSNAGAERITDVALDFWRSGKQREDIKLKDIEHALSVSVFNNKNSGFWHSSLIDRNLIDYFVPFLPLEYKHLKMCIRVEMQSRGYEIDEDIVSRVAEEMTFFPKEERVFSDKGCKTVFTKLDYYYDD</original>
    <variation>ARMEVWNPFLDVIGFGVSLLWDEIWEFYVEMSEPGKRFMSQFPLERCRS</variation>
    <location>
        <begin position="149"/>
        <end position="332"/>
    </location>
</feature>
<feature type="sequence variant" id="VAR_070932" description="In DYT1; increased identical protein binding; decreased ATP-dependent chaperone mediated protein folding; changed nuclear membrane organization; decreased neuron projection development; dbSNP:rs267607134." evidence="17 22">
    <original>F</original>
    <variation>I</variation>
    <location>
        <position position="205"/>
    </location>
</feature>
<feature type="sequence variant" id="VAR_020449" description="In dbSNP:rs1801968." evidence="23">
    <original>D</original>
    <variation>H</variation>
    <location>
        <position position="216"/>
    </location>
</feature>
<feature type="sequence variant" id="VAR_010788" evidence="28">
    <original>D</original>
    <variation>H</variation>
    <location>
        <position position="264"/>
    </location>
</feature>
<feature type="sequence variant" id="VAR_084705" description="In AMC5." evidence="27">
    <location>
        <begin position="288"/>
        <end position="332"/>
    </location>
</feature>
<feature type="sequence variant" id="VAR_070933" description="In DYT1; increased identical protein binding; decreased ATP-dependent chaperone mediated protein folding; changed nuclear membrane organization; dbSNP:rs727502811." evidence="13 22">
    <original>R</original>
    <variation>Q</variation>
    <location>
        <position position="288"/>
    </location>
</feature>
<feature type="sequence variant" id="VAR_010789" description="In DYT1 and AMC5; acts as a dominant negative; increased identical protein binding; loss of interaction with TOR1AIP1 and TOR1AIP2 with loss of ATPase activity induction; increased localization to the nuclear membrane; decreased ATP-dependent chaperone mediated protein folding; changed nuclear membrane organization; dbSNP:rs80358233." evidence="5 7 9 11 12 13 14 17 19 20 21 22 24 25 26 28">
    <location>
        <position position="303"/>
    </location>
</feature>
<feature type="sequence variant" id="VAR_084706" description="In AMC5; increased localization to the nuclear membrane; induces the formation of spheroid bodies in cells; dbSNP:rs2030965698." evidence="26">
    <original>G</original>
    <variation>S</variation>
    <location>
        <position position="318"/>
    </location>
</feature>
<feature type="sequence variant" id="VAR_070934" description="Found in a patient with early-onset atypical dystonia and myoclonic features; uncertain significance; dbSNP:rs80358235." evidence="4">
    <location>
        <begin position="323"/>
        <end position="328"/>
    </location>
</feature>
<feature type="mutagenesis site" description="Inhibits sequence signal cleavage." evidence="10">
    <original>V</original>
    <variation>F</variation>
    <location>
        <position position="18"/>
    </location>
</feature>
<feature type="mutagenesis site" description="Inhibits sequence signal cleavage." evidence="10">
    <original>A</original>
    <variation>F</variation>
    <location>
        <position position="20"/>
    </location>
</feature>
<feature type="mutagenesis site" description="N-glycosylated." evidence="10">
    <original>V</original>
    <variation>N</variation>
    <location>
        <position position="33"/>
    </location>
</feature>
<feature type="mutagenesis site" description="Loss of ATP-binding. No effect on interaction with KLHL14. Increases interaction with TOR1AIP1 and TOR1AIP2. Abolishes interaction with SLC6A3." evidence="7 15 16">
    <original>K</original>
    <variation>A</variation>
    <location>
        <position position="108"/>
    </location>
</feature>
<feature type="mutagenesis site" description="Reduces N-glycosylation." evidence="3">
    <original>N</original>
    <variation>Q</variation>
    <location>
        <position position="143"/>
    </location>
</feature>
<feature type="mutagenesis site" description="Reduces N-glycosylation." evidence="3">
    <original>N</original>
    <variation>Q</variation>
    <location>
        <position position="158"/>
    </location>
</feature>
<feature type="mutagenesis site" description="Loss of ATP hydrolysis. Loss of interaction with KLHL14. Localizes in the nuclear envelope. No effect on interaction with TOR1AIP1." evidence="15 16 18 21 24">
    <original>E</original>
    <variation>Q</variation>
    <location>
        <position position="171"/>
    </location>
</feature>
<feature type="sequence conflict" description="In Ref. 3; AAP35577 and 5; AAH00674." evidence="30" ref="3 5">
    <original>D</original>
    <variation>H</variation>
    <location>
        <position position="259"/>
    </location>
</feature>
<feature type="helix" evidence="32">
    <location>
        <begin position="58"/>
        <end position="68"/>
    </location>
</feature>
<feature type="helix" evidence="32">
    <location>
        <begin position="73"/>
        <end position="87"/>
    </location>
</feature>
<feature type="strand" evidence="32">
    <location>
        <begin position="96"/>
        <end position="102"/>
    </location>
</feature>
<feature type="helix" evidence="32">
    <location>
        <begin position="108"/>
        <end position="119"/>
    </location>
</feature>
<feature type="helix" evidence="32">
    <location>
        <begin position="123"/>
        <end position="125"/>
    </location>
</feature>
<feature type="strand" evidence="32">
    <location>
        <begin position="129"/>
        <end position="133"/>
    </location>
</feature>
<feature type="helix" evidence="32">
    <location>
        <begin position="134"/>
        <end position="137"/>
    </location>
</feature>
<feature type="helix" evidence="32">
    <location>
        <begin position="141"/>
        <end position="143"/>
    </location>
</feature>
<feature type="helix" evidence="32">
    <location>
        <begin position="144"/>
        <end position="161"/>
    </location>
</feature>
<feature type="strand" evidence="32">
    <location>
        <begin position="166"/>
        <end position="170"/>
    </location>
</feature>
<feature type="helix" evidence="32">
    <location>
        <begin position="172"/>
        <end position="174"/>
    </location>
</feature>
<feature type="helix" evidence="32">
    <location>
        <begin position="177"/>
        <end position="187"/>
    </location>
</feature>
<feature type="strand" evidence="32">
    <location>
        <begin position="202"/>
        <end position="207"/>
    </location>
</feature>
<feature type="helix" evidence="32">
    <location>
        <begin position="211"/>
        <end position="223"/>
    </location>
</feature>
<feature type="helix" evidence="32">
    <location>
        <begin position="228"/>
        <end position="230"/>
    </location>
</feature>
<feature type="helix" evidence="32">
    <location>
        <begin position="233"/>
        <end position="239"/>
    </location>
</feature>
<feature type="turn" evidence="32">
    <location>
        <begin position="240"/>
        <end position="245"/>
    </location>
</feature>
<feature type="helix" evidence="32">
    <location>
        <begin position="247"/>
        <end position="252"/>
    </location>
</feature>
<feature type="strand" evidence="32">
    <location>
        <begin position="256"/>
        <end position="262"/>
    </location>
</feature>
<feature type="strand" evidence="32">
    <location>
        <begin position="264"/>
        <end position="269"/>
    </location>
</feature>
<feature type="helix" evidence="32">
    <location>
        <begin position="274"/>
        <end position="287"/>
    </location>
</feature>
<feature type="helix" evidence="32">
    <location>
        <begin position="294"/>
        <end position="303"/>
    </location>
</feature>
<feature type="strand" evidence="32">
    <location>
        <begin position="306"/>
        <end position="308"/>
    </location>
</feature>
<feature type="turn" evidence="32">
    <location>
        <begin position="309"/>
        <end position="311"/>
    </location>
</feature>
<feature type="turn" evidence="32">
    <location>
        <begin position="316"/>
        <end position="322"/>
    </location>
</feature>
<feature type="helix" evidence="32">
    <location>
        <begin position="323"/>
        <end position="328"/>
    </location>
</feature>
<dbReference type="EC" id="3.6.4.-"/>
<dbReference type="EMBL" id="AF007871">
    <property type="protein sequence ID" value="AAC51732.1"/>
    <property type="molecule type" value="mRNA"/>
</dbReference>
<dbReference type="EMBL" id="AK314505">
    <property type="protein sequence ID" value="BAG37105.1"/>
    <property type="molecule type" value="mRNA"/>
</dbReference>
<dbReference type="EMBL" id="BT006931">
    <property type="protein sequence ID" value="AAP35577.1"/>
    <property type="molecule type" value="mRNA"/>
</dbReference>
<dbReference type="EMBL" id="AL158207">
    <property type="status" value="NOT_ANNOTATED_CDS"/>
    <property type="molecule type" value="Genomic_DNA"/>
</dbReference>
<dbReference type="EMBL" id="BC000674">
    <property type="protein sequence ID" value="AAH00674.1"/>
    <property type="molecule type" value="mRNA"/>
</dbReference>
<dbReference type="EMBL" id="BC014484">
    <property type="protein sequence ID" value="AAH14484.1"/>
    <property type="molecule type" value="mRNA"/>
</dbReference>
<dbReference type="CCDS" id="CCDS6930.1">
    <molecule id="O14656-1"/>
</dbReference>
<dbReference type="RefSeq" id="NP_000104.1">
    <molecule id="O14656-1"/>
    <property type="nucleotide sequence ID" value="NM_000113.3"/>
</dbReference>
<dbReference type="PDB" id="5J1S">
    <property type="method" value="X-ray"/>
    <property type="resolution" value="1.40 A"/>
    <property type="chains" value="A=51-332"/>
</dbReference>
<dbReference type="PDB" id="5J1T">
    <property type="method" value="X-ray"/>
    <property type="resolution" value="1.40 A"/>
    <property type="chains" value="A=51-332"/>
</dbReference>
<dbReference type="PDB" id="6OIF">
    <property type="method" value="EM"/>
    <property type="resolution" value="4.40 A"/>
    <property type="chains" value="A/B/C/D/E/F/G/H/I/J/K/L/M/N/O/P/Q/R/S/T/U/V/W/X/Y=51-332"/>
</dbReference>
<dbReference type="PDBsum" id="5J1S"/>
<dbReference type="PDBsum" id="5J1T"/>
<dbReference type="PDBsum" id="6OIF"/>
<dbReference type="EMDB" id="EMD-20076"/>
<dbReference type="SMR" id="O14656"/>
<dbReference type="BioGRID" id="108193">
    <property type="interactions" value="110"/>
</dbReference>
<dbReference type="CORUM" id="O14656"/>
<dbReference type="DIP" id="DIP-34411N"/>
<dbReference type="FunCoup" id="O14656">
    <property type="interactions" value="2971"/>
</dbReference>
<dbReference type="IntAct" id="O14656">
    <property type="interactions" value="96"/>
</dbReference>
<dbReference type="MINT" id="O14656"/>
<dbReference type="STRING" id="9606.ENSP00000345719"/>
<dbReference type="GlyConnect" id="1821">
    <property type="glycosylation" value="2 N-Linked glycans (1 site)"/>
</dbReference>
<dbReference type="GlyCosmos" id="O14656">
    <property type="glycosylation" value="2 sites, 2 glycans"/>
</dbReference>
<dbReference type="GlyGen" id="O14656">
    <property type="glycosylation" value="3 sites, 8 N-linked glycans (1 site), 1 O-linked glycan (1 site)"/>
</dbReference>
<dbReference type="iPTMnet" id="O14656"/>
<dbReference type="PhosphoSitePlus" id="O14656"/>
<dbReference type="BioMuta" id="TOR1A"/>
<dbReference type="jPOST" id="O14656"/>
<dbReference type="MassIVE" id="O14656"/>
<dbReference type="PaxDb" id="9606-ENSP00000345719"/>
<dbReference type="PeptideAtlas" id="O14656"/>
<dbReference type="ProteomicsDB" id="48152">
    <molecule id="O14656-1"/>
</dbReference>
<dbReference type="ProteomicsDB" id="48153">
    <molecule id="O14656-2"/>
</dbReference>
<dbReference type="Pumba" id="O14656"/>
<dbReference type="ABCD" id="O14656">
    <property type="antibodies" value="1 sequenced antibody"/>
</dbReference>
<dbReference type="Antibodypedia" id="31437">
    <property type="antibodies" value="267 antibodies from 32 providers"/>
</dbReference>
<dbReference type="DNASU" id="1861"/>
<dbReference type="Ensembl" id="ENST00000351698.5">
    <molecule id="O14656-1"/>
    <property type="protein sequence ID" value="ENSP00000345719.4"/>
    <property type="gene ID" value="ENSG00000136827.12"/>
</dbReference>
<dbReference type="GeneID" id="1861"/>
<dbReference type="KEGG" id="hsa:1861"/>
<dbReference type="MANE-Select" id="ENST00000351698.5">
    <property type="protein sequence ID" value="ENSP00000345719.4"/>
    <property type="RefSeq nucleotide sequence ID" value="NM_000113.3"/>
    <property type="RefSeq protein sequence ID" value="NP_000104.1"/>
</dbReference>
<dbReference type="UCSC" id="uc004byl.4">
    <molecule id="O14656-1"/>
    <property type="organism name" value="human"/>
</dbReference>
<dbReference type="AGR" id="HGNC:3098"/>
<dbReference type="CTD" id="1861"/>
<dbReference type="DisGeNET" id="1861"/>
<dbReference type="GeneCards" id="TOR1A"/>
<dbReference type="GeneReviews" id="TOR1A"/>
<dbReference type="HGNC" id="HGNC:3098">
    <property type="gene designation" value="TOR1A"/>
</dbReference>
<dbReference type="HPA" id="ENSG00000136827">
    <property type="expression patterns" value="Low tissue specificity"/>
</dbReference>
<dbReference type="MalaCards" id="TOR1A"/>
<dbReference type="MIM" id="128100">
    <property type="type" value="phenotype"/>
</dbReference>
<dbReference type="MIM" id="605204">
    <property type="type" value="gene"/>
</dbReference>
<dbReference type="MIM" id="618947">
    <property type="type" value="phenotype"/>
</dbReference>
<dbReference type="neXtProt" id="NX_O14656"/>
<dbReference type="OpenTargets" id="ENSG00000136827"/>
<dbReference type="Orphanet" id="256">
    <property type="disease" value="Early-onset generalized limb-onset dystonia"/>
</dbReference>
<dbReference type="Orphanet" id="36899">
    <property type="disease" value="Myoclonus-dystonia syndrome"/>
</dbReference>
<dbReference type="PharmGKB" id="PA27556"/>
<dbReference type="VEuPathDB" id="HostDB:ENSG00000136827"/>
<dbReference type="eggNOG" id="KOG2170">
    <property type="taxonomic scope" value="Eukaryota"/>
</dbReference>
<dbReference type="GeneTree" id="ENSGT00950000182888"/>
<dbReference type="HOGENOM" id="CLU_053537_0_0_1"/>
<dbReference type="InParanoid" id="O14656"/>
<dbReference type="OMA" id="YTKLDYY"/>
<dbReference type="OrthoDB" id="19623at2759"/>
<dbReference type="PAN-GO" id="O14656">
    <property type="GO annotations" value="5 GO annotations based on evolutionary models"/>
</dbReference>
<dbReference type="PhylomeDB" id="O14656"/>
<dbReference type="TreeFam" id="TF314941"/>
<dbReference type="PathwayCommons" id="O14656"/>
<dbReference type="Reactome" id="R-HSA-8856825">
    <property type="pathway name" value="Cargo recognition for clathrin-mediated endocytosis"/>
</dbReference>
<dbReference type="SignaLink" id="O14656"/>
<dbReference type="SIGNOR" id="O14656"/>
<dbReference type="BioGRID-ORCS" id="1861">
    <property type="hits" value="19 hits in 1163 CRISPR screens"/>
</dbReference>
<dbReference type="ChiTaRS" id="TOR1A">
    <property type="organism name" value="human"/>
</dbReference>
<dbReference type="GeneWiki" id="Torsin_A"/>
<dbReference type="GenomeRNAi" id="1861"/>
<dbReference type="Pharos" id="O14656">
    <property type="development level" value="Tbio"/>
</dbReference>
<dbReference type="PRO" id="PR:O14656"/>
<dbReference type="Proteomes" id="UP000005640">
    <property type="component" value="Chromosome 9"/>
</dbReference>
<dbReference type="RNAct" id="O14656">
    <property type="molecule type" value="protein"/>
</dbReference>
<dbReference type="Bgee" id="ENSG00000136827">
    <property type="expression patterns" value="Expressed in stromal cell of endometrium and 193 other cell types or tissues"/>
</dbReference>
<dbReference type="ExpressionAtlas" id="O14656">
    <property type="expression patterns" value="baseline and differential"/>
</dbReference>
<dbReference type="GO" id="GO:0030659">
    <property type="term" value="C:cytoplasmic vesicle membrane"/>
    <property type="evidence" value="ECO:0007669"/>
    <property type="project" value="UniProtKB-SubCell"/>
</dbReference>
<dbReference type="GO" id="GO:0005856">
    <property type="term" value="C:cytoskeleton"/>
    <property type="evidence" value="ECO:0007669"/>
    <property type="project" value="UniProtKB-SubCell"/>
</dbReference>
<dbReference type="GO" id="GO:0005829">
    <property type="term" value="C:cytosol"/>
    <property type="evidence" value="ECO:0000304"/>
    <property type="project" value="Reactome"/>
</dbReference>
<dbReference type="GO" id="GO:0005783">
    <property type="term" value="C:endoplasmic reticulum"/>
    <property type="evidence" value="ECO:0000314"/>
    <property type="project" value="CACAO"/>
</dbReference>
<dbReference type="GO" id="GO:0005788">
    <property type="term" value="C:endoplasmic reticulum lumen"/>
    <property type="evidence" value="ECO:0000314"/>
    <property type="project" value="UniProtKB"/>
</dbReference>
<dbReference type="GO" id="GO:0005789">
    <property type="term" value="C:endoplasmic reticulum membrane"/>
    <property type="evidence" value="ECO:0000314"/>
    <property type="project" value="UniProtKB"/>
</dbReference>
<dbReference type="GO" id="GO:0070062">
    <property type="term" value="C:extracellular exosome"/>
    <property type="evidence" value="ECO:0007005"/>
    <property type="project" value="UniProtKB"/>
</dbReference>
<dbReference type="GO" id="GO:0030426">
    <property type="term" value="C:growth cone"/>
    <property type="evidence" value="ECO:0000250"/>
    <property type="project" value="UniProtKB"/>
</dbReference>
<dbReference type="GO" id="GO:0043231">
    <property type="term" value="C:intracellular membrane-bounded organelle"/>
    <property type="evidence" value="ECO:0000314"/>
    <property type="project" value="HPA"/>
</dbReference>
<dbReference type="GO" id="GO:0016020">
    <property type="term" value="C:membrane"/>
    <property type="evidence" value="ECO:0000314"/>
    <property type="project" value="UniProtKB"/>
</dbReference>
<dbReference type="GO" id="GO:0005635">
    <property type="term" value="C:nuclear envelope"/>
    <property type="evidence" value="ECO:0000250"/>
    <property type="project" value="UniProtKB"/>
</dbReference>
<dbReference type="GO" id="GO:0031965">
    <property type="term" value="C:nuclear membrane"/>
    <property type="evidence" value="ECO:0000314"/>
    <property type="project" value="HPA"/>
</dbReference>
<dbReference type="GO" id="GO:0030141">
    <property type="term" value="C:secretory granule"/>
    <property type="evidence" value="ECO:0000250"/>
    <property type="project" value="UniProtKB"/>
</dbReference>
<dbReference type="GO" id="GO:0008021">
    <property type="term" value="C:synaptic vesicle"/>
    <property type="evidence" value="ECO:0000314"/>
    <property type="project" value="UniProtKB"/>
</dbReference>
<dbReference type="GO" id="GO:0005524">
    <property type="term" value="F:ATP binding"/>
    <property type="evidence" value="ECO:0007669"/>
    <property type="project" value="UniProtKB-KW"/>
</dbReference>
<dbReference type="GO" id="GO:0016887">
    <property type="term" value="F:ATP hydrolysis activity"/>
    <property type="evidence" value="ECO:0000314"/>
    <property type="project" value="UniProtKB"/>
</dbReference>
<dbReference type="GO" id="GO:0140662">
    <property type="term" value="F:ATP-dependent protein folding chaperone"/>
    <property type="evidence" value="ECO:0000314"/>
    <property type="project" value="UniProtKB"/>
</dbReference>
<dbReference type="GO" id="GO:0008092">
    <property type="term" value="F:cytoskeletal protein binding"/>
    <property type="evidence" value="ECO:0000353"/>
    <property type="project" value="UniProtKB"/>
</dbReference>
<dbReference type="GO" id="GO:0042802">
    <property type="term" value="F:identical protein binding"/>
    <property type="evidence" value="ECO:0000315"/>
    <property type="project" value="UniProtKB"/>
</dbReference>
<dbReference type="GO" id="GO:0019894">
    <property type="term" value="F:kinesin binding"/>
    <property type="evidence" value="ECO:0000353"/>
    <property type="project" value="UniProtKB"/>
</dbReference>
<dbReference type="GO" id="GO:0051787">
    <property type="term" value="F:misfolded protein binding"/>
    <property type="evidence" value="ECO:0007669"/>
    <property type="project" value="Ensembl"/>
</dbReference>
<dbReference type="GO" id="GO:0051082">
    <property type="term" value="F:unfolded protein binding"/>
    <property type="evidence" value="ECO:0000304"/>
    <property type="project" value="ProtInc"/>
</dbReference>
<dbReference type="GO" id="GO:0007155">
    <property type="term" value="P:cell adhesion"/>
    <property type="evidence" value="ECO:0000315"/>
    <property type="project" value="UniProtKB"/>
</dbReference>
<dbReference type="GO" id="GO:0051085">
    <property type="term" value="P:chaperone cofactor-dependent protein refolding"/>
    <property type="evidence" value="ECO:0007669"/>
    <property type="project" value="InterPro"/>
</dbReference>
<dbReference type="GO" id="GO:0061077">
    <property type="term" value="P:chaperone-mediated protein folding"/>
    <property type="evidence" value="ECO:0000314"/>
    <property type="project" value="UniProtKB"/>
</dbReference>
<dbReference type="GO" id="GO:0036503">
    <property type="term" value="P:ERAD pathway"/>
    <property type="evidence" value="ECO:0000250"/>
    <property type="project" value="UniProtKB"/>
</dbReference>
<dbReference type="GO" id="GO:0045104">
    <property type="term" value="P:intermediate filament cytoskeleton organization"/>
    <property type="evidence" value="ECO:0000315"/>
    <property type="project" value="UniProtKB"/>
</dbReference>
<dbReference type="GO" id="GO:0031175">
    <property type="term" value="P:neuron projection development"/>
    <property type="evidence" value="ECO:0000315"/>
    <property type="project" value="UniProtKB"/>
</dbReference>
<dbReference type="GO" id="GO:0006998">
    <property type="term" value="P:nuclear envelope organization"/>
    <property type="evidence" value="ECO:0000250"/>
    <property type="project" value="UniProtKB"/>
</dbReference>
<dbReference type="GO" id="GO:0071763">
    <property type="term" value="P:nuclear membrane organization"/>
    <property type="evidence" value="ECO:0000250"/>
    <property type="project" value="UniProtKB"/>
</dbReference>
<dbReference type="GO" id="GO:1900244">
    <property type="term" value="P:positive regulation of synaptic vesicle endocytosis"/>
    <property type="evidence" value="ECO:0000315"/>
    <property type="project" value="UniProtKB"/>
</dbReference>
<dbReference type="GO" id="GO:0000338">
    <property type="term" value="P:protein deneddylation"/>
    <property type="evidence" value="ECO:0000315"/>
    <property type="project" value="UniProtKB"/>
</dbReference>
<dbReference type="GO" id="GO:0034504">
    <property type="term" value="P:protein localization to nucleus"/>
    <property type="evidence" value="ECO:0000315"/>
    <property type="project" value="UniProtKB"/>
</dbReference>
<dbReference type="GO" id="GO:0051584">
    <property type="term" value="P:regulation of dopamine uptake involved in synaptic transmission"/>
    <property type="evidence" value="ECO:0000314"/>
    <property type="project" value="UniProtKB"/>
</dbReference>
<dbReference type="GO" id="GO:2000008">
    <property type="term" value="P:regulation of protein localization to cell surface"/>
    <property type="evidence" value="ECO:0000315"/>
    <property type="project" value="GO_Central"/>
</dbReference>
<dbReference type="GO" id="GO:0006979">
    <property type="term" value="P:response to oxidative stress"/>
    <property type="evidence" value="ECO:0007669"/>
    <property type="project" value="Ensembl"/>
</dbReference>
<dbReference type="GO" id="GO:0048499">
    <property type="term" value="P:synaptic vesicle membrane organization"/>
    <property type="evidence" value="ECO:0000315"/>
    <property type="project" value="UniProtKB"/>
</dbReference>
<dbReference type="GO" id="GO:0048489">
    <property type="term" value="P:synaptic vesicle transport"/>
    <property type="evidence" value="ECO:0000315"/>
    <property type="project" value="UniProtKB"/>
</dbReference>
<dbReference type="GO" id="GO:0044319">
    <property type="term" value="P:wound healing, spreading of cells"/>
    <property type="evidence" value="ECO:0000250"/>
    <property type="project" value="UniProtKB"/>
</dbReference>
<dbReference type="FunFam" id="3.40.50.300:FF:000743">
    <property type="entry name" value="Torsin"/>
    <property type="match status" value="1"/>
</dbReference>
<dbReference type="Gene3D" id="3.40.50.300">
    <property type="entry name" value="P-loop containing nucleotide triphosphate hydrolases"/>
    <property type="match status" value="1"/>
</dbReference>
<dbReference type="InterPro" id="IPR027417">
    <property type="entry name" value="P-loop_NTPase"/>
</dbReference>
<dbReference type="InterPro" id="IPR049337">
    <property type="entry name" value="TOR1A_C"/>
</dbReference>
<dbReference type="InterPro" id="IPR010448">
    <property type="entry name" value="Torsin"/>
</dbReference>
<dbReference type="InterPro" id="IPR017378">
    <property type="entry name" value="Torsin_1/2"/>
</dbReference>
<dbReference type="PANTHER" id="PTHR10760">
    <property type="entry name" value="TORSIN"/>
    <property type="match status" value="1"/>
</dbReference>
<dbReference type="PANTHER" id="PTHR10760:SF15">
    <property type="entry name" value="TORSIN-1A"/>
    <property type="match status" value="1"/>
</dbReference>
<dbReference type="Pfam" id="PF21376">
    <property type="entry name" value="TOR1A_C"/>
    <property type="match status" value="1"/>
</dbReference>
<dbReference type="Pfam" id="PF06309">
    <property type="entry name" value="Torsin"/>
    <property type="match status" value="1"/>
</dbReference>
<dbReference type="PIRSF" id="PIRSF038079">
    <property type="entry name" value="Torsin_2A"/>
    <property type="match status" value="1"/>
</dbReference>
<dbReference type="SUPFAM" id="SSF52540">
    <property type="entry name" value="P-loop containing nucleoside triphosphate hydrolases"/>
    <property type="match status" value="1"/>
</dbReference>
<proteinExistence type="evidence at protein level"/>
<gene>
    <name type="primary">TOR1A</name>
    <name type="synonym">DQ2</name>
    <name type="synonym">DYT1</name>
    <name type="synonym">TA</name>
    <name type="synonym">TORA</name>
</gene>
<keyword id="KW-0002">3D-structure</keyword>
<keyword id="KW-0025">Alternative splicing</keyword>
<keyword id="KW-0067">ATP-binding</keyword>
<keyword id="KW-0966">Cell projection</keyword>
<keyword id="KW-0143">Chaperone</keyword>
<keyword id="KW-0963">Cytoplasm</keyword>
<keyword id="KW-0968">Cytoplasmic vesicle</keyword>
<keyword id="KW-0206">Cytoskeleton</keyword>
<keyword id="KW-0225">Disease variant</keyword>
<keyword id="KW-1023">Dystonia</keyword>
<keyword id="KW-0256">Endoplasmic reticulum</keyword>
<keyword id="KW-0325">Glycoprotein</keyword>
<keyword id="KW-0378">Hydrolase</keyword>
<keyword id="KW-0472">Membrane</keyword>
<keyword id="KW-0547">Nucleotide-binding</keyword>
<keyword id="KW-0539">Nucleus</keyword>
<keyword id="KW-1267">Proteomics identification</keyword>
<keyword id="KW-1185">Reference proteome</keyword>
<keyword id="KW-0732">Signal</keyword>
<keyword id="KW-0770">Synapse</keyword>
<accession>O14656</accession>
<accession>B2RB58</accession>
<accession>Q53Y64</accession>
<accession>Q96CA0</accession>
<organism>
    <name type="scientific">Homo sapiens</name>
    <name type="common">Human</name>
    <dbReference type="NCBI Taxonomy" id="9606"/>
    <lineage>
        <taxon>Eukaryota</taxon>
        <taxon>Metazoa</taxon>
        <taxon>Chordata</taxon>
        <taxon>Craniata</taxon>
        <taxon>Vertebrata</taxon>
        <taxon>Euteleostomi</taxon>
        <taxon>Mammalia</taxon>
        <taxon>Eutheria</taxon>
        <taxon>Euarchontoglires</taxon>
        <taxon>Primates</taxon>
        <taxon>Haplorrhini</taxon>
        <taxon>Catarrhini</taxon>
        <taxon>Hominidae</taxon>
        <taxon>Homo</taxon>
    </lineage>
</organism>